<feature type="chain" id="PRO_0000081481" description="RNA binding protein fox-1 homolog 1">
    <location>
        <begin position="1"/>
        <end position="396"/>
    </location>
</feature>
<feature type="domain" description="RRM" evidence="2">
    <location>
        <begin position="116"/>
        <end position="192"/>
    </location>
</feature>
<feature type="region of interest" description="Disordered" evidence="3">
    <location>
        <begin position="1"/>
        <end position="119"/>
    </location>
</feature>
<feature type="compositionally biased region" description="Polar residues" evidence="3">
    <location>
        <begin position="67"/>
        <end position="86"/>
    </location>
</feature>
<feature type="compositionally biased region" description="Low complexity" evidence="3">
    <location>
        <begin position="87"/>
        <end position="98"/>
    </location>
</feature>
<feature type="compositionally biased region" description="Polar residues" evidence="3">
    <location>
        <begin position="99"/>
        <end position="112"/>
    </location>
</feature>
<feature type="site" description="Interaction with RNA" evidence="1">
    <location>
        <position position="117"/>
    </location>
</feature>
<feature type="site" description="Interaction with RNA" evidence="1">
    <location>
        <position position="125"/>
    </location>
</feature>
<feature type="site" description="Interaction with RNA" evidence="1">
    <location>
        <position position="126"/>
    </location>
</feature>
<feature type="site" description="Interaction with RNA" evidence="1">
    <location>
        <position position="150"/>
    </location>
</feature>
<feature type="site" description="Interaction with RNA" evidence="1">
    <location>
        <position position="155"/>
    </location>
</feature>
<feature type="site" description="Interaction with RNA" evidence="1">
    <location>
        <position position="159"/>
    </location>
</feature>
<feature type="site" description="Interaction with RNA" evidence="1">
    <location>
        <position position="183"/>
    </location>
</feature>
<feature type="site" description="Interaction with RNA" evidence="1">
    <location>
        <position position="193"/>
    </location>
</feature>
<feature type="modified residue" description="Asymmetric dimethylarginine" evidence="13">
    <location>
        <position position="316"/>
    </location>
</feature>
<feature type="modified residue" description="Omega-N-methylarginine" evidence="13">
    <location>
        <position position="387"/>
    </location>
</feature>
<feature type="splice variant" id="VSP_030879" description="In isoform 2." evidence="8">
    <location>
        <begin position="1"/>
        <end position="20"/>
    </location>
</feature>
<feature type="splice variant" id="VSP_030880" description="In isoform 3, isoform 6 and isoform 7." evidence="9 10 11">
    <original>MNCEREQLR</original>
    <variation>MLASQGVLLHSYGVPMIVPAAPYFPGLMQ</variation>
    <location>
        <begin position="1"/>
        <end position="9"/>
    </location>
</feature>
<feature type="splice variant" id="VSP_030881" description="In isoform 7." evidence="9">
    <location>
        <begin position="156"/>
        <end position="186"/>
    </location>
</feature>
<feature type="splice variant" id="VSP_030882" description="In isoform 4." evidence="10">
    <location>
        <begin position="207"/>
        <end position="224"/>
    </location>
</feature>
<feature type="splice variant" id="VSP_030883" description="In isoform 3, isoform 6 and isoform 7." evidence="9 10 11">
    <original>DGFYGADIY</original>
    <variation>EPVYGNKLLQ</variation>
    <location>
        <begin position="301"/>
        <end position="309"/>
    </location>
</feature>
<feature type="splice variant" id="VSP_030884" description="In isoform 5, isoform 6 and isoform 7." evidence="8 9 10">
    <original>SYGRVYAADPYHHTLAPAPTYGVGAMNAFAPLTDAKTRSHADDVGLVLSSLQASIYRGGYNRFAPY</original>
    <variation>RNQFVFVATDEISCNTSAVTDEFMLPTPTTTHLLQPPPTALVP</variation>
    <location>
        <begin position="331"/>
        <end position="396"/>
    </location>
</feature>
<feature type="sequence conflict" description="In Ref. 4; BAA95079." evidence="12" ref="4">
    <original>D</original>
    <variation>G</variation>
    <location>
        <position position="60"/>
    </location>
</feature>
<feature type="sequence conflict" description="In Ref. 1; AAF78292." evidence="12" ref="1">
    <original>P</original>
    <variation>PFR</variation>
    <location>
        <position position="124"/>
    </location>
</feature>
<feature type="sequence conflict" description="In Ref. 1; AAF78292." evidence="12" ref="1">
    <original>F</original>
    <variation>FS</variation>
    <location>
        <position position="136"/>
    </location>
</feature>
<feature type="sequence conflict" description="In Ref. 3; AAL83425." evidence="12" ref="3">
    <original>T</original>
    <variation>S</variation>
    <location>
        <position position="261"/>
    </location>
</feature>
<feature type="sequence conflict" description="In Ref. 3; AAL83425." evidence="12" ref="3">
    <original>V</original>
    <variation>G</variation>
    <location>
        <position position="278"/>
    </location>
</feature>
<feature type="sequence conflict" description="In Ref. 3; AAL83425." evidence="12" ref="3">
    <original>F</original>
    <variation>L</variation>
    <location>
        <position position="282"/>
    </location>
</feature>
<feature type="sequence conflict" description="In Ref. 4; BAA95079." evidence="12" ref="4">
    <original>S</original>
    <variation>G</variation>
    <location>
        <position position="369"/>
    </location>
</feature>
<feature type="modified residue" description="Asymmetric dimethylarginine" evidence="13">
    <location sequence="Q9JJ43-3">
        <position position="337"/>
    </location>
</feature>
<name>RFOX1_MOUSE</name>
<comment type="function">
    <text evidence="4 5 6 7">RNA-binding protein that regulates alternative splicing events by binding to 5'-UGCAUGU-3' elements. Prevents binding of U2AF2 to the 3'-splice site. Regulates alternative splicing of tissue-specific exons and of differentially spliced exons during erythropoiesis.</text>
</comment>
<comment type="subunit">
    <text evidence="1">Binds to the C-terminus of ATXN2.</text>
</comment>
<comment type="subcellular location">
    <subcellularLocation>
        <location>Nucleus</location>
    </subcellularLocation>
    <subcellularLocation>
        <location>Cytoplasm</location>
    </subcellularLocation>
    <text>Predominantly nuclear.</text>
</comment>
<comment type="alternative products">
    <event type="alternative splicing"/>
    <isoform>
        <id>Q9JJ43-1</id>
        <name>1</name>
        <name>A016</name>
        <sequence type="displayed"/>
    </isoform>
    <isoform>
        <id>Q9JJ43-2</id>
        <name>2</name>
        <sequence type="described" ref="VSP_030879"/>
    </isoform>
    <isoform>
        <id>Q9JJ43-3</id>
        <name>3</name>
        <name>A713</name>
        <sequence type="described" ref="VSP_030880 VSP_030883"/>
    </isoform>
    <isoform>
        <id>Q9JJ43-4</id>
        <name>4</name>
        <sequence type="described" ref="VSP_030882"/>
    </isoform>
    <isoform>
        <id>Q9JJ43-5</id>
        <name>5</name>
        <name>2</name>
        <name>A030</name>
        <sequence type="described" ref="VSP_030884"/>
    </isoform>
    <isoform>
        <id>Q9JJ43-6</id>
        <name>6</name>
        <name>4</name>
        <name>A715</name>
        <sequence type="described" ref="VSP_030880 VSP_030883 VSP_030884"/>
    </isoform>
    <isoform>
        <id>Q9JJ43-7</id>
        <name>7</name>
        <name>5</name>
        <name>A704</name>
        <sequence type="described" ref="VSP_030880 VSP_030881 VSP_030883 VSP_030884"/>
    </isoform>
</comment>
<comment type="tissue specificity">
    <text evidence="4 5 6">Detected in brain (at protein level). Detected in heart, brain, neurons, skeletal muscle and embryo.</text>
</comment>
<keyword id="KW-0025">Alternative splicing</keyword>
<keyword id="KW-0963">Cytoplasm</keyword>
<keyword id="KW-0488">Methylation</keyword>
<keyword id="KW-0507">mRNA processing</keyword>
<keyword id="KW-0508">mRNA splicing</keyword>
<keyword id="KW-0539">Nucleus</keyword>
<keyword id="KW-1185">Reference proteome</keyword>
<keyword id="KW-0694">RNA-binding</keyword>
<gene>
    <name type="primary">Rbfox1</name>
    <name type="synonym">A2bp</name>
    <name type="synonym">A2bp1</name>
    <name type="synonym">Fox1</name>
    <name type="ORF">MNCb-3035</name>
</gene>
<dbReference type="EMBL" id="AF107204">
    <property type="protein sequence ID" value="AAF78292.1"/>
    <property type="molecule type" value="mRNA"/>
</dbReference>
<dbReference type="EMBL" id="AY659954">
    <property type="protein sequence ID" value="AAV74337.1"/>
    <property type="molecule type" value="mRNA"/>
</dbReference>
<dbReference type="EMBL" id="AY659955">
    <property type="protein sequence ID" value="AAV74338.1"/>
    <property type="molecule type" value="mRNA"/>
</dbReference>
<dbReference type="EMBL" id="AY659956">
    <property type="protein sequence ID" value="AAV74339.1"/>
    <property type="molecule type" value="mRNA"/>
</dbReference>
<dbReference type="EMBL" id="AY659957">
    <property type="protein sequence ID" value="AAV74340.1"/>
    <property type="molecule type" value="mRNA"/>
</dbReference>
<dbReference type="EMBL" id="AY659958">
    <property type="protein sequence ID" value="AAV74341.1"/>
    <property type="molecule type" value="mRNA"/>
</dbReference>
<dbReference type="EMBL" id="AF191501">
    <property type="protein sequence ID" value="AAL83425.1"/>
    <property type="molecule type" value="mRNA"/>
</dbReference>
<dbReference type="EMBL" id="AB041596">
    <property type="protein sequence ID" value="BAA95079.1"/>
    <property type="molecule type" value="mRNA"/>
</dbReference>
<dbReference type="EMBL" id="AK134833">
    <property type="protein sequence ID" value="BAE22304.1"/>
    <property type="molecule type" value="mRNA"/>
</dbReference>
<dbReference type="EMBL" id="BC059002">
    <property type="protein sequence ID" value="AAH59002.1"/>
    <property type="molecule type" value="mRNA"/>
</dbReference>
<dbReference type="CCDS" id="CCDS27936.1">
    <molecule id="Q9JJ43-3"/>
</dbReference>
<dbReference type="CCDS" id="CCDS37245.1">
    <molecule id="Q9JJ43-1"/>
</dbReference>
<dbReference type="RefSeq" id="NP_001346652.1">
    <molecule id="Q9JJ43-1"/>
    <property type="nucleotide sequence ID" value="NM_001359723.2"/>
</dbReference>
<dbReference type="RefSeq" id="NP_001346654.1">
    <molecule id="Q9JJ43-1"/>
    <property type="nucleotide sequence ID" value="NM_001359725.2"/>
</dbReference>
<dbReference type="RefSeq" id="NP_001404270.1">
    <molecule id="Q9JJ43-1"/>
    <property type="nucleotide sequence ID" value="NM_001417341.1"/>
</dbReference>
<dbReference type="RefSeq" id="NP_001404271.1">
    <molecule id="Q9JJ43-1"/>
    <property type="nucleotide sequence ID" value="NM_001417342.1"/>
</dbReference>
<dbReference type="RefSeq" id="NP_001404272.1">
    <molecule id="Q9JJ43-6"/>
    <property type="nucleotide sequence ID" value="NM_001417343.1"/>
</dbReference>
<dbReference type="RefSeq" id="NP_001404310.1">
    <molecule id="Q9JJ43-4"/>
    <property type="nucleotide sequence ID" value="NM_001417381.1"/>
</dbReference>
<dbReference type="RefSeq" id="NP_001404311.1">
    <molecule id="Q9JJ43-4"/>
    <property type="nucleotide sequence ID" value="NM_001417382.1"/>
</dbReference>
<dbReference type="RefSeq" id="NP_001404312.1">
    <molecule id="Q9JJ43-4"/>
    <property type="nucleotide sequence ID" value="NM_001417383.1"/>
</dbReference>
<dbReference type="RefSeq" id="NP_001404313.1">
    <molecule id="Q9JJ43-4"/>
    <property type="nucleotide sequence ID" value="NM_001417384.1"/>
</dbReference>
<dbReference type="RefSeq" id="NP_001404315.1">
    <molecule id="Q9JJ43-2"/>
    <property type="nucleotide sequence ID" value="NM_001417386.1"/>
</dbReference>
<dbReference type="RefSeq" id="NP_001404317.1">
    <molecule id="Q9JJ43-5"/>
    <property type="nucleotide sequence ID" value="NM_001417388.1"/>
</dbReference>
<dbReference type="RefSeq" id="NP_001404318.1">
    <molecule id="Q9JJ43-5"/>
    <property type="nucleotide sequence ID" value="NM_001417389.1"/>
</dbReference>
<dbReference type="RefSeq" id="NP_001404319.1">
    <molecule id="Q9JJ43-5"/>
    <property type="nucleotide sequence ID" value="NM_001417390.1"/>
</dbReference>
<dbReference type="RefSeq" id="NP_067452.2">
    <molecule id="Q9JJ43-1"/>
    <property type="nucleotide sequence ID" value="NM_021477.6"/>
</dbReference>
<dbReference type="RefSeq" id="NP_899011.2">
    <molecule id="Q9JJ43-3"/>
    <property type="nucleotide sequence ID" value="NM_183188.3"/>
</dbReference>
<dbReference type="RefSeq" id="XP_006522251.1">
    <property type="nucleotide sequence ID" value="XM_006522188.1"/>
</dbReference>
<dbReference type="RefSeq" id="XP_006522252.1">
    <property type="nucleotide sequence ID" value="XM_006522189.3"/>
</dbReference>
<dbReference type="RefSeq" id="XP_006522253.1">
    <property type="nucleotide sequence ID" value="XM_006522190.1"/>
</dbReference>
<dbReference type="RefSeq" id="XP_006522255.1">
    <property type="nucleotide sequence ID" value="XM_006522192.3"/>
</dbReference>
<dbReference type="RefSeq" id="XP_011244213.1">
    <property type="nucleotide sequence ID" value="XM_011245911.2"/>
</dbReference>
<dbReference type="RefSeq" id="XP_011244218.1">
    <property type="nucleotide sequence ID" value="XM_011245916.1"/>
</dbReference>
<dbReference type="RefSeq" id="XP_017172487.1">
    <property type="nucleotide sequence ID" value="XM_017316998.1"/>
</dbReference>
<dbReference type="RefSeq" id="XP_017172491.1">
    <property type="nucleotide sequence ID" value="XM_017317002.1"/>
</dbReference>
<dbReference type="BMRB" id="Q9JJ43"/>
<dbReference type="SMR" id="Q9JJ43"/>
<dbReference type="BioGRID" id="234568">
    <property type="interactions" value="4"/>
</dbReference>
<dbReference type="FunCoup" id="Q9JJ43">
    <property type="interactions" value="1734"/>
</dbReference>
<dbReference type="IntAct" id="Q9JJ43">
    <property type="interactions" value="1"/>
</dbReference>
<dbReference type="STRING" id="10090.ENSMUSP00000155364"/>
<dbReference type="GlyGen" id="Q9JJ43">
    <property type="glycosylation" value="3 sites, 1 O-linked glycan (1 site)"/>
</dbReference>
<dbReference type="iPTMnet" id="Q9JJ43"/>
<dbReference type="PhosphoSitePlus" id="Q9JJ43"/>
<dbReference type="SwissPalm" id="Q9JJ43"/>
<dbReference type="PaxDb" id="10090-ENSMUSP00000049970"/>
<dbReference type="PeptideAtlas" id="Q9JJ43"/>
<dbReference type="ProteomicsDB" id="255300">
    <molecule id="Q9JJ43-1"/>
</dbReference>
<dbReference type="ProteomicsDB" id="255301">
    <molecule id="Q9JJ43-2"/>
</dbReference>
<dbReference type="ProteomicsDB" id="255302">
    <molecule id="Q9JJ43-3"/>
</dbReference>
<dbReference type="ProteomicsDB" id="255303">
    <molecule id="Q9JJ43-4"/>
</dbReference>
<dbReference type="ProteomicsDB" id="255304">
    <molecule id="Q9JJ43-5"/>
</dbReference>
<dbReference type="ProteomicsDB" id="255305">
    <molecule id="Q9JJ43-6"/>
</dbReference>
<dbReference type="ProteomicsDB" id="255306">
    <molecule id="Q9JJ43-7"/>
</dbReference>
<dbReference type="Pumba" id="Q9JJ43"/>
<dbReference type="Antibodypedia" id="24505">
    <property type="antibodies" value="391 antibodies from 32 providers"/>
</dbReference>
<dbReference type="DNASU" id="268859"/>
<dbReference type="Ensembl" id="ENSMUST00000056416.9">
    <molecule id="Q9JJ43-1"/>
    <property type="protein sequence ID" value="ENSMUSP00000049970.9"/>
    <property type="gene ID" value="ENSMUSG00000008658.18"/>
</dbReference>
<dbReference type="Ensembl" id="ENSMUST00000115841.10">
    <molecule id="Q9JJ43-1"/>
    <property type="protein sequence ID" value="ENSMUSP00000111507.4"/>
    <property type="gene ID" value="ENSMUSG00000008658.18"/>
</dbReference>
<dbReference type="Ensembl" id="ENSMUST00000229741.2">
    <molecule id="Q9JJ43-3"/>
    <property type="protein sequence ID" value="ENSMUSP00000155364.2"/>
    <property type="gene ID" value="ENSMUSG00000008658.18"/>
</dbReference>
<dbReference type="Ensembl" id="ENSMUST00000230658.3">
    <molecule id="Q9JJ43-1"/>
    <property type="protein sequence ID" value="ENSMUSP00000155069.3"/>
    <property type="gene ID" value="ENSMUSG00000008658.18"/>
</dbReference>
<dbReference type="Ensembl" id="ENSMUST00000231088.3">
    <molecule id="Q9JJ43-4"/>
    <property type="protein sequence ID" value="ENSMUSP00000155799.3"/>
    <property type="gene ID" value="ENSMUSG00000008658.18"/>
</dbReference>
<dbReference type="Ensembl" id="ENSMUST00000249861.1">
    <molecule id="Q9JJ43-5"/>
    <property type="protein sequence ID" value="ENSMUSP00000159957.1"/>
    <property type="gene ID" value="ENSMUSG00000008658.18"/>
</dbReference>
<dbReference type="GeneID" id="268859"/>
<dbReference type="KEGG" id="mmu:268859"/>
<dbReference type="UCSC" id="uc007ycb.2">
    <molecule id="Q9JJ43-1"/>
    <property type="organism name" value="mouse"/>
</dbReference>
<dbReference type="UCSC" id="uc007ycc.2">
    <molecule id="Q9JJ43-4"/>
    <property type="organism name" value="mouse"/>
</dbReference>
<dbReference type="UCSC" id="uc007ycf.2">
    <molecule id="Q9JJ43-3"/>
    <property type="organism name" value="mouse"/>
</dbReference>
<dbReference type="UCSC" id="uc007ycg.2">
    <molecule id="Q9JJ43-6"/>
    <property type="organism name" value="mouse"/>
</dbReference>
<dbReference type="UCSC" id="uc007ych.2">
    <molecule id="Q9JJ43-7"/>
    <property type="organism name" value="mouse"/>
</dbReference>
<dbReference type="UCSC" id="uc007yci.2">
    <molecule id="Q9JJ43-5"/>
    <property type="organism name" value="mouse"/>
</dbReference>
<dbReference type="AGR" id="MGI:1926224"/>
<dbReference type="CTD" id="54715"/>
<dbReference type="MGI" id="MGI:1926224">
    <property type="gene designation" value="Rbfox1"/>
</dbReference>
<dbReference type="VEuPathDB" id="HostDB:ENSMUSG00000008658"/>
<dbReference type="eggNOG" id="KOG0125">
    <property type="taxonomic scope" value="Eukaryota"/>
</dbReference>
<dbReference type="GeneTree" id="ENSGT00940000160685"/>
<dbReference type="HOGENOM" id="CLU_048440_0_0_1"/>
<dbReference type="InParanoid" id="Q9JJ43"/>
<dbReference type="OMA" id="LNMYPPT"/>
<dbReference type="PhylomeDB" id="Q9JJ43"/>
<dbReference type="TreeFam" id="TF315942"/>
<dbReference type="BioGRID-ORCS" id="268859">
    <property type="hits" value="2 hits in 78 CRISPR screens"/>
</dbReference>
<dbReference type="ChiTaRS" id="Rbfox1">
    <property type="organism name" value="mouse"/>
</dbReference>
<dbReference type="PRO" id="PR:Q9JJ43"/>
<dbReference type="Proteomes" id="UP000000589">
    <property type="component" value="Chromosome 16"/>
</dbReference>
<dbReference type="RNAct" id="Q9JJ43">
    <property type="molecule type" value="protein"/>
</dbReference>
<dbReference type="Bgee" id="ENSMUSG00000008658">
    <property type="expression patterns" value="Expressed in caudate-putamen and 197 other cell types or tissues"/>
</dbReference>
<dbReference type="ExpressionAtlas" id="Q9JJ43">
    <property type="expression patterns" value="baseline and differential"/>
</dbReference>
<dbReference type="GO" id="GO:0005737">
    <property type="term" value="C:cytoplasm"/>
    <property type="evidence" value="ECO:0000314"/>
    <property type="project" value="MGI"/>
</dbReference>
<dbReference type="GO" id="GO:0005654">
    <property type="term" value="C:nucleoplasm"/>
    <property type="evidence" value="ECO:0000304"/>
    <property type="project" value="Reactome"/>
</dbReference>
<dbReference type="GO" id="GO:0005634">
    <property type="term" value="C:nucleus"/>
    <property type="evidence" value="ECO:0000314"/>
    <property type="project" value="MGI"/>
</dbReference>
<dbReference type="GO" id="GO:0003730">
    <property type="term" value="F:mRNA 3'-UTR binding"/>
    <property type="evidence" value="ECO:0000314"/>
    <property type="project" value="MGI"/>
</dbReference>
<dbReference type="GO" id="GO:0003723">
    <property type="term" value="F:RNA binding"/>
    <property type="evidence" value="ECO:0000314"/>
    <property type="project" value="MGI"/>
</dbReference>
<dbReference type="GO" id="GO:0006397">
    <property type="term" value="P:mRNA processing"/>
    <property type="evidence" value="ECO:0007669"/>
    <property type="project" value="UniProtKB-KW"/>
</dbReference>
<dbReference type="GO" id="GO:0007399">
    <property type="term" value="P:nervous system development"/>
    <property type="evidence" value="ECO:0007669"/>
    <property type="project" value="InterPro"/>
</dbReference>
<dbReference type="GO" id="GO:0050885">
    <property type="term" value="P:neuromuscular process controlling balance"/>
    <property type="evidence" value="ECO:0000316"/>
    <property type="project" value="MGI"/>
</dbReference>
<dbReference type="GO" id="GO:0000381">
    <property type="term" value="P:regulation of alternative mRNA splicing, via spliceosome"/>
    <property type="evidence" value="ECO:0000315"/>
    <property type="project" value="MGI"/>
</dbReference>
<dbReference type="GO" id="GO:2001014">
    <property type="term" value="P:regulation of skeletal muscle cell differentiation"/>
    <property type="evidence" value="ECO:0000315"/>
    <property type="project" value="MGI"/>
</dbReference>
<dbReference type="GO" id="GO:0008380">
    <property type="term" value="P:RNA splicing"/>
    <property type="evidence" value="ECO:0007669"/>
    <property type="project" value="UniProtKB-KW"/>
</dbReference>
<dbReference type="CDD" id="cd12407">
    <property type="entry name" value="RRM_FOX1_like"/>
    <property type="match status" value="1"/>
</dbReference>
<dbReference type="FunFam" id="3.30.70.330:FF:000375">
    <property type="entry name" value="RNA binding fox-1 homolog 1"/>
    <property type="match status" value="1"/>
</dbReference>
<dbReference type="Gene3D" id="3.30.70.330">
    <property type="match status" value="1"/>
</dbReference>
<dbReference type="InterPro" id="IPR025670">
    <property type="entry name" value="Fox-1_C_dom"/>
</dbReference>
<dbReference type="InterPro" id="IPR034237">
    <property type="entry name" value="FOX1_RRM"/>
</dbReference>
<dbReference type="InterPro" id="IPR012677">
    <property type="entry name" value="Nucleotide-bd_a/b_plait_sf"/>
</dbReference>
<dbReference type="InterPro" id="IPR035979">
    <property type="entry name" value="RBD_domain_sf"/>
</dbReference>
<dbReference type="InterPro" id="IPR017325">
    <property type="entry name" value="RBFOX1-3"/>
</dbReference>
<dbReference type="InterPro" id="IPR047131">
    <property type="entry name" value="RBFOX1-like"/>
</dbReference>
<dbReference type="InterPro" id="IPR000504">
    <property type="entry name" value="RRM_dom"/>
</dbReference>
<dbReference type="PANTHER" id="PTHR15597">
    <property type="entry name" value="ATAXIN 2-BINDING PROTEIN 1-RELATED"/>
    <property type="match status" value="1"/>
</dbReference>
<dbReference type="PANTHER" id="PTHR15597:SF45">
    <property type="entry name" value="RNA BINDING PROTEIN FOX-1 HOMOLOG 1"/>
    <property type="match status" value="1"/>
</dbReference>
<dbReference type="Pfam" id="PF12414">
    <property type="entry name" value="Fox-1_C"/>
    <property type="match status" value="1"/>
</dbReference>
<dbReference type="Pfam" id="PF00076">
    <property type="entry name" value="RRM_1"/>
    <property type="match status" value="1"/>
</dbReference>
<dbReference type="PIRSF" id="PIRSF037932">
    <property type="entry name" value="Ataxin_2_bd_A2BP"/>
    <property type="match status" value="1"/>
</dbReference>
<dbReference type="SMART" id="SM00360">
    <property type="entry name" value="RRM"/>
    <property type="match status" value="1"/>
</dbReference>
<dbReference type="SUPFAM" id="SSF54928">
    <property type="entry name" value="RNA-binding domain, RBD"/>
    <property type="match status" value="1"/>
</dbReference>
<dbReference type="PROSITE" id="PS50102">
    <property type="entry name" value="RRM"/>
    <property type="match status" value="1"/>
</dbReference>
<accession>Q9JJ43</accession>
<accession>Q3UYA8</accession>
<accession>Q537C9</accession>
<accession>Q537D0</accession>
<accession>Q537D1</accession>
<accession>Q537D2</accession>
<accession>Q6PD12</accession>
<accession>Q8R4Z7</accession>
<accession>Q9JJB5</accession>
<proteinExistence type="evidence at protein level"/>
<protein>
    <recommendedName>
        <fullName>RNA binding protein fox-1 homolog 1</fullName>
    </recommendedName>
    <alternativeName>
        <fullName>Ataxin-2-binding protein 1</fullName>
    </alternativeName>
    <alternativeName>
        <fullName>Fox-1 homolog A</fullName>
    </alternativeName>
</protein>
<sequence>MNCEREQLRGNQEAAAAPDTMAQPYASAQFAPPQNGIPAEYTAPHPHPAPEYTGQTTVPDHTLNLYPPTQTHSEQSADTSAQTVSGTATQTDDAAPTDGQPQTQPSENTESKSQPKRLHVSNIPFRFRDPDLRQMFGQFGKILDVEIIFNERGSKGFGFVTFENSADADRAREKLHGTVVEGRKIEVNNATARVMTNKKTVNPYTNGWKLNPVVGAVYSPDFYAGTVLLCQANQEGSSMYSGPSSLVYTSAMPGFPYPAATAAAAYRGAHLRGRGRTVYNTFRAAAPPPPIPAYGGVVYQDGFYGADIYGGYAAYRYAQPTPATAAAYSDSYGRVYAADPYHHTLAPAPTYGVGAMNAFAPLTDAKTRSHADDVGLVLSSLQASIYRGGYNRFAPY</sequence>
<reference key="1">
    <citation type="journal article" date="2000" name="Hum. Mol. Genet.">
        <title>A novel protein with RNA-binding motifs interacts with ataxin-2.</title>
        <authorList>
            <person name="Shibata H."/>
            <person name="Huynh D.P."/>
            <person name="Pulst S.-M."/>
        </authorList>
    </citation>
    <scope>NUCLEOTIDE SEQUENCE [MRNA] (ISOFORM 2)</scope>
</reference>
<reference key="2">
    <citation type="journal article" date="2005" name="Nucleic Acids Res.">
        <title>Tissue-dependent isoforms of mammalian Fox-1 homologs are associated with tissue-specific splicing activities.</title>
        <authorList>
            <person name="Nakahata S."/>
            <person name="Kawamoto S."/>
        </authorList>
    </citation>
    <scope>NUCLEOTIDE SEQUENCE [MRNA] (ISOFORMS 1; 3; 5; 6 AND 7)</scope>
    <scope>FUNCTION</scope>
    <scope>SUBCELLULAR LOCATION</scope>
    <scope>TISSUE SPECIFICITY</scope>
    <source>
        <tissue>Brain</tissue>
        <tissue>Muscle</tissue>
    </source>
</reference>
<reference key="3">
    <citation type="submission" date="1999-10" db="EMBL/GenBank/DDBJ databases">
        <authorList>
            <person name="Chen W."/>
            <person name="Winkelmann J.C."/>
        </authorList>
    </citation>
    <scope>NUCLEOTIDE SEQUENCE [MRNA] (ISOFORM 3)</scope>
    <source>
        <tissue>Skeletal muscle</tissue>
    </source>
</reference>
<reference key="4">
    <citation type="submission" date="2000-04" db="EMBL/GenBank/DDBJ databases">
        <title>Isolation of full-length cDNA clones from mouse brain cDNA library made by oligo-capping method.</title>
        <authorList>
            <person name="Osada N."/>
            <person name="Kusuda J."/>
            <person name="Tanuma R."/>
            <person name="Ito A."/>
            <person name="Hirata M."/>
            <person name="Sugano S."/>
            <person name="Hashimoto K."/>
        </authorList>
    </citation>
    <scope>NUCLEOTIDE SEQUENCE [LARGE SCALE MRNA] (ISOFORM 1)</scope>
    <source>
        <strain>C57BL/6J</strain>
        <tissue>Brain</tissue>
    </source>
</reference>
<reference key="5">
    <citation type="journal article" date="2005" name="Science">
        <title>The transcriptional landscape of the mammalian genome.</title>
        <authorList>
            <person name="Carninci P."/>
            <person name="Kasukawa T."/>
            <person name="Katayama S."/>
            <person name="Gough J."/>
            <person name="Frith M.C."/>
            <person name="Maeda N."/>
            <person name="Oyama R."/>
            <person name="Ravasi T."/>
            <person name="Lenhard B."/>
            <person name="Wells C."/>
            <person name="Kodzius R."/>
            <person name="Shimokawa K."/>
            <person name="Bajic V.B."/>
            <person name="Brenner S.E."/>
            <person name="Batalov S."/>
            <person name="Forrest A.R."/>
            <person name="Zavolan M."/>
            <person name="Davis M.J."/>
            <person name="Wilming L.G."/>
            <person name="Aidinis V."/>
            <person name="Allen J.E."/>
            <person name="Ambesi-Impiombato A."/>
            <person name="Apweiler R."/>
            <person name="Aturaliya R.N."/>
            <person name="Bailey T.L."/>
            <person name="Bansal M."/>
            <person name="Baxter L."/>
            <person name="Beisel K.W."/>
            <person name="Bersano T."/>
            <person name="Bono H."/>
            <person name="Chalk A.M."/>
            <person name="Chiu K.P."/>
            <person name="Choudhary V."/>
            <person name="Christoffels A."/>
            <person name="Clutterbuck D.R."/>
            <person name="Crowe M.L."/>
            <person name="Dalla E."/>
            <person name="Dalrymple B.P."/>
            <person name="de Bono B."/>
            <person name="Della Gatta G."/>
            <person name="di Bernardo D."/>
            <person name="Down T."/>
            <person name="Engstrom P."/>
            <person name="Fagiolini M."/>
            <person name="Faulkner G."/>
            <person name="Fletcher C.F."/>
            <person name="Fukushima T."/>
            <person name="Furuno M."/>
            <person name="Futaki S."/>
            <person name="Gariboldi M."/>
            <person name="Georgii-Hemming P."/>
            <person name="Gingeras T.R."/>
            <person name="Gojobori T."/>
            <person name="Green R.E."/>
            <person name="Gustincich S."/>
            <person name="Harbers M."/>
            <person name="Hayashi Y."/>
            <person name="Hensch T.K."/>
            <person name="Hirokawa N."/>
            <person name="Hill D."/>
            <person name="Huminiecki L."/>
            <person name="Iacono M."/>
            <person name="Ikeo K."/>
            <person name="Iwama A."/>
            <person name="Ishikawa T."/>
            <person name="Jakt M."/>
            <person name="Kanapin A."/>
            <person name="Katoh M."/>
            <person name="Kawasawa Y."/>
            <person name="Kelso J."/>
            <person name="Kitamura H."/>
            <person name="Kitano H."/>
            <person name="Kollias G."/>
            <person name="Krishnan S.P."/>
            <person name="Kruger A."/>
            <person name="Kummerfeld S.K."/>
            <person name="Kurochkin I.V."/>
            <person name="Lareau L.F."/>
            <person name="Lazarevic D."/>
            <person name="Lipovich L."/>
            <person name="Liu J."/>
            <person name="Liuni S."/>
            <person name="McWilliam S."/>
            <person name="Madan Babu M."/>
            <person name="Madera M."/>
            <person name="Marchionni L."/>
            <person name="Matsuda H."/>
            <person name="Matsuzawa S."/>
            <person name="Miki H."/>
            <person name="Mignone F."/>
            <person name="Miyake S."/>
            <person name="Morris K."/>
            <person name="Mottagui-Tabar S."/>
            <person name="Mulder N."/>
            <person name="Nakano N."/>
            <person name="Nakauchi H."/>
            <person name="Ng P."/>
            <person name="Nilsson R."/>
            <person name="Nishiguchi S."/>
            <person name="Nishikawa S."/>
            <person name="Nori F."/>
            <person name="Ohara O."/>
            <person name="Okazaki Y."/>
            <person name="Orlando V."/>
            <person name="Pang K.C."/>
            <person name="Pavan W.J."/>
            <person name="Pavesi G."/>
            <person name="Pesole G."/>
            <person name="Petrovsky N."/>
            <person name="Piazza S."/>
            <person name="Reed J."/>
            <person name="Reid J.F."/>
            <person name="Ring B.Z."/>
            <person name="Ringwald M."/>
            <person name="Rost B."/>
            <person name="Ruan Y."/>
            <person name="Salzberg S.L."/>
            <person name="Sandelin A."/>
            <person name="Schneider C."/>
            <person name="Schoenbach C."/>
            <person name="Sekiguchi K."/>
            <person name="Semple C.A."/>
            <person name="Seno S."/>
            <person name="Sessa L."/>
            <person name="Sheng Y."/>
            <person name="Shibata Y."/>
            <person name="Shimada H."/>
            <person name="Shimada K."/>
            <person name="Silva D."/>
            <person name="Sinclair B."/>
            <person name="Sperling S."/>
            <person name="Stupka E."/>
            <person name="Sugiura K."/>
            <person name="Sultana R."/>
            <person name="Takenaka Y."/>
            <person name="Taki K."/>
            <person name="Tammoja K."/>
            <person name="Tan S.L."/>
            <person name="Tang S."/>
            <person name="Taylor M.S."/>
            <person name="Tegner J."/>
            <person name="Teichmann S.A."/>
            <person name="Ueda H.R."/>
            <person name="van Nimwegen E."/>
            <person name="Verardo R."/>
            <person name="Wei C.L."/>
            <person name="Yagi K."/>
            <person name="Yamanishi H."/>
            <person name="Zabarovsky E."/>
            <person name="Zhu S."/>
            <person name="Zimmer A."/>
            <person name="Hide W."/>
            <person name="Bult C."/>
            <person name="Grimmond S.M."/>
            <person name="Teasdale R.D."/>
            <person name="Liu E.T."/>
            <person name="Brusic V."/>
            <person name="Quackenbush J."/>
            <person name="Wahlestedt C."/>
            <person name="Mattick J.S."/>
            <person name="Hume D.A."/>
            <person name="Kai C."/>
            <person name="Sasaki D."/>
            <person name="Tomaru Y."/>
            <person name="Fukuda S."/>
            <person name="Kanamori-Katayama M."/>
            <person name="Suzuki M."/>
            <person name="Aoki J."/>
            <person name="Arakawa T."/>
            <person name="Iida J."/>
            <person name="Imamura K."/>
            <person name="Itoh M."/>
            <person name="Kato T."/>
            <person name="Kawaji H."/>
            <person name="Kawagashira N."/>
            <person name="Kawashima T."/>
            <person name="Kojima M."/>
            <person name="Kondo S."/>
            <person name="Konno H."/>
            <person name="Nakano K."/>
            <person name="Ninomiya N."/>
            <person name="Nishio T."/>
            <person name="Okada M."/>
            <person name="Plessy C."/>
            <person name="Shibata K."/>
            <person name="Shiraki T."/>
            <person name="Suzuki S."/>
            <person name="Tagami M."/>
            <person name="Waki K."/>
            <person name="Watahiki A."/>
            <person name="Okamura-Oho Y."/>
            <person name="Suzuki H."/>
            <person name="Kawai J."/>
            <person name="Hayashizaki Y."/>
        </authorList>
    </citation>
    <scope>NUCLEOTIDE SEQUENCE [LARGE SCALE MRNA] (ISOFORM 4)</scope>
    <source>
        <strain>C57BL/6J</strain>
        <tissue>Medulla oblongata</tissue>
    </source>
</reference>
<reference key="6">
    <citation type="journal article" date="2004" name="Genome Res.">
        <title>The status, quality, and expansion of the NIH full-length cDNA project: the Mammalian Gene Collection (MGC).</title>
        <authorList>
            <consortium name="The MGC Project Team"/>
        </authorList>
    </citation>
    <scope>NUCLEOTIDE SEQUENCE [LARGE SCALE MRNA] (ISOFORM 1)</scope>
    <source>
        <strain>C57BL/6J</strain>
        <tissue>Brain</tissue>
    </source>
</reference>
<reference key="7">
    <citation type="journal article" date="2003" name="EMBO J.">
        <title>A vertebrate RNA-binding protein Fox-1 regulates tissue-specific splicing via the pentanucleotide GCAUG.</title>
        <authorList>
            <person name="Jin Y."/>
            <person name="Suzuki H."/>
            <person name="Maegawa S."/>
            <person name="Endo H."/>
            <person name="Sugano S."/>
            <person name="Hashimoto K."/>
            <person name="Yasuda K."/>
            <person name="Inoue K."/>
        </authorList>
    </citation>
    <scope>FUNCTION</scope>
    <scope>SUBCELLULAR LOCATION</scope>
    <scope>TISSUE SPECIFICITY</scope>
</reference>
<reference key="8">
    <citation type="journal article" date="2005" name="Mol. Cell. Biol.">
        <title>Homologues of the Caenorhabditis elegans Fox-1 protein are neuronal splicing regulators in mammals.</title>
        <authorList>
            <person name="Underwood J.G."/>
            <person name="Boutz P.L."/>
            <person name="Dougherty J.D."/>
            <person name="Stoilov P."/>
            <person name="Black D.L."/>
        </authorList>
    </citation>
    <scope>FUNCTION</scope>
    <scope>SUBCELLULAR LOCATION</scope>
    <scope>TISSUE SPECIFICITY</scope>
</reference>
<reference key="9">
    <citation type="journal article" date="2007" name="Mol. Cell. Biol.">
        <title>Role for Fox-1/Fox-2 in mediating the neuronal pathway of calcitonin/calcitonin gene-related peptide alternative RNA processing.</title>
        <authorList>
            <person name="Zhou H.-L."/>
            <person name="Baraniak A.P."/>
            <person name="Lou H."/>
        </authorList>
    </citation>
    <scope>FUNCTION</scope>
</reference>
<reference key="10">
    <citation type="journal article" date="2014" name="Mol. Cell. Proteomics">
        <title>Immunoaffinity enrichment and mass spectrometry analysis of protein methylation.</title>
        <authorList>
            <person name="Guo A."/>
            <person name="Gu H."/>
            <person name="Zhou J."/>
            <person name="Mulhern D."/>
            <person name="Wang Y."/>
            <person name="Lee K.A."/>
            <person name="Yang V."/>
            <person name="Aguiar M."/>
            <person name="Kornhauser J."/>
            <person name="Jia X."/>
            <person name="Ren J."/>
            <person name="Beausoleil S.A."/>
            <person name="Silva J.C."/>
            <person name="Vemulapalli V."/>
            <person name="Bedford M.T."/>
            <person name="Comb M.J."/>
        </authorList>
    </citation>
    <scope>METHYLATION [LARGE SCALE ANALYSIS] AT ARG-316 AND ARG-387</scope>
    <scope>METHYLATION [LARGE SCALE ANALYSIS] AT ARG-337 (ISOFORM 3)</scope>
    <scope>IDENTIFICATION BY MASS SPECTROMETRY [LARGE SCALE ANALYSIS]</scope>
    <source>
        <tissue>Brain</tissue>
        <tissue>Embryo</tissue>
    </source>
</reference>
<organism>
    <name type="scientific">Mus musculus</name>
    <name type="common">Mouse</name>
    <dbReference type="NCBI Taxonomy" id="10090"/>
    <lineage>
        <taxon>Eukaryota</taxon>
        <taxon>Metazoa</taxon>
        <taxon>Chordata</taxon>
        <taxon>Craniata</taxon>
        <taxon>Vertebrata</taxon>
        <taxon>Euteleostomi</taxon>
        <taxon>Mammalia</taxon>
        <taxon>Eutheria</taxon>
        <taxon>Euarchontoglires</taxon>
        <taxon>Glires</taxon>
        <taxon>Rodentia</taxon>
        <taxon>Myomorpha</taxon>
        <taxon>Muroidea</taxon>
        <taxon>Muridae</taxon>
        <taxon>Murinae</taxon>
        <taxon>Mus</taxon>
        <taxon>Mus</taxon>
    </lineage>
</organism>
<evidence type="ECO:0000250" key="1"/>
<evidence type="ECO:0000255" key="2">
    <source>
        <dbReference type="PROSITE-ProRule" id="PRU00176"/>
    </source>
</evidence>
<evidence type="ECO:0000256" key="3">
    <source>
        <dbReference type="SAM" id="MobiDB-lite"/>
    </source>
</evidence>
<evidence type="ECO:0000269" key="4">
    <source>
    </source>
</evidence>
<evidence type="ECO:0000269" key="5">
    <source>
    </source>
</evidence>
<evidence type="ECO:0000269" key="6">
    <source>
    </source>
</evidence>
<evidence type="ECO:0000269" key="7">
    <source>
    </source>
</evidence>
<evidence type="ECO:0000303" key="8">
    <source>
    </source>
</evidence>
<evidence type="ECO:0000303" key="9">
    <source>
    </source>
</evidence>
<evidence type="ECO:0000303" key="10">
    <source>
    </source>
</evidence>
<evidence type="ECO:0000303" key="11">
    <source ref="3"/>
</evidence>
<evidence type="ECO:0000305" key="12"/>
<evidence type="ECO:0007744" key="13">
    <source>
    </source>
</evidence>